<gene>
    <name evidence="1" type="primary">murI</name>
    <name type="ordered locus">Cpha266_0415</name>
</gene>
<reference key="1">
    <citation type="submission" date="2006-12" db="EMBL/GenBank/DDBJ databases">
        <title>Complete sequence of Chlorobium phaeobacteroides DSM 266.</title>
        <authorList>
            <consortium name="US DOE Joint Genome Institute"/>
            <person name="Copeland A."/>
            <person name="Lucas S."/>
            <person name="Lapidus A."/>
            <person name="Barry K."/>
            <person name="Detter J.C."/>
            <person name="Glavina del Rio T."/>
            <person name="Hammon N."/>
            <person name="Israni S."/>
            <person name="Pitluck S."/>
            <person name="Goltsman E."/>
            <person name="Schmutz J."/>
            <person name="Larimer F."/>
            <person name="Land M."/>
            <person name="Hauser L."/>
            <person name="Mikhailova N."/>
            <person name="Li T."/>
            <person name="Overmann J."/>
            <person name="Bryant D.A."/>
            <person name="Richardson P."/>
        </authorList>
    </citation>
    <scope>NUCLEOTIDE SEQUENCE [LARGE SCALE GENOMIC DNA]</scope>
    <source>
        <strain>DSM 266 / SMG 266 / 2430</strain>
    </source>
</reference>
<keyword id="KW-0133">Cell shape</keyword>
<keyword id="KW-0961">Cell wall biogenesis/degradation</keyword>
<keyword id="KW-0413">Isomerase</keyword>
<keyword id="KW-0573">Peptidoglycan synthesis</keyword>
<keyword id="KW-1185">Reference proteome</keyword>
<accession>A1BDJ6</accession>
<comment type="function">
    <text evidence="1">Provides the (R)-glutamate required for cell wall biosynthesis.</text>
</comment>
<comment type="catalytic activity">
    <reaction evidence="1">
        <text>L-glutamate = D-glutamate</text>
        <dbReference type="Rhea" id="RHEA:12813"/>
        <dbReference type="ChEBI" id="CHEBI:29985"/>
        <dbReference type="ChEBI" id="CHEBI:29986"/>
        <dbReference type="EC" id="5.1.1.3"/>
    </reaction>
</comment>
<comment type="pathway">
    <text evidence="1">Cell wall biogenesis; peptidoglycan biosynthesis.</text>
</comment>
<comment type="similarity">
    <text evidence="1">Belongs to the aspartate/glutamate racemases family.</text>
</comment>
<protein>
    <recommendedName>
        <fullName evidence="1">Glutamate racemase</fullName>
        <ecNumber evidence="1">5.1.1.3</ecNumber>
    </recommendedName>
</protein>
<proteinExistence type="inferred from homology"/>
<feature type="chain" id="PRO_1000047555" description="Glutamate racemase">
    <location>
        <begin position="1"/>
        <end position="272"/>
    </location>
</feature>
<feature type="active site" description="Proton donor/acceptor" evidence="1">
    <location>
        <position position="79"/>
    </location>
</feature>
<feature type="active site" description="Proton donor/acceptor" evidence="1">
    <location>
        <position position="191"/>
    </location>
</feature>
<feature type="binding site" evidence="1">
    <location>
        <begin position="16"/>
        <end position="17"/>
    </location>
    <ligand>
        <name>substrate</name>
    </ligand>
</feature>
<feature type="binding site" evidence="1">
    <location>
        <begin position="48"/>
        <end position="49"/>
    </location>
    <ligand>
        <name>substrate</name>
    </ligand>
</feature>
<feature type="binding site" evidence="1">
    <location>
        <begin position="80"/>
        <end position="81"/>
    </location>
    <ligand>
        <name>substrate</name>
    </ligand>
</feature>
<feature type="binding site" evidence="1">
    <location>
        <begin position="192"/>
        <end position="193"/>
    </location>
    <ligand>
        <name>substrate</name>
    </ligand>
</feature>
<dbReference type="EC" id="5.1.1.3" evidence="1"/>
<dbReference type="EMBL" id="CP000492">
    <property type="protein sequence ID" value="ABL64473.1"/>
    <property type="molecule type" value="Genomic_DNA"/>
</dbReference>
<dbReference type="RefSeq" id="WP_011744306.1">
    <property type="nucleotide sequence ID" value="NC_008639.1"/>
</dbReference>
<dbReference type="SMR" id="A1BDJ6"/>
<dbReference type="STRING" id="290317.Cpha266_0415"/>
<dbReference type="KEGG" id="cph:Cpha266_0415"/>
<dbReference type="eggNOG" id="COG0796">
    <property type="taxonomic scope" value="Bacteria"/>
</dbReference>
<dbReference type="HOGENOM" id="CLU_052344_0_2_10"/>
<dbReference type="OrthoDB" id="9801055at2"/>
<dbReference type="UniPathway" id="UPA00219"/>
<dbReference type="Proteomes" id="UP000008701">
    <property type="component" value="Chromosome"/>
</dbReference>
<dbReference type="GO" id="GO:0008881">
    <property type="term" value="F:glutamate racemase activity"/>
    <property type="evidence" value="ECO:0007669"/>
    <property type="project" value="UniProtKB-UniRule"/>
</dbReference>
<dbReference type="GO" id="GO:0071555">
    <property type="term" value="P:cell wall organization"/>
    <property type="evidence" value="ECO:0007669"/>
    <property type="project" value="UniProtKB-KW"/>
</dbReference>
<dbReference type="GO" id="GO:0009252">
    <property type="term" value="P:peptidoglycan biosynthetic process"/>
    <property type="evidence" value="ECO:0007669"/>
    <property type="project" value="UniProtKB-UniRule"/>
</dbReference>
<dbReference type="GO" id="GO:0008360">
    <property type="term" value="P:regulation of cell shape"/>
    <property type="evidence" value="ECO:0007669"/>
    <property type="project" value="UniProtKB-KW"/>
</dbReference>
<dbReference type="FunFam" id="3.40.50.1860:FF:000001">
    <property type="entry name" value="Glutamate racemase"/>
    <property type="match status" value="1"/>
</dbReference>
<dbReference type="Gene3D" id="3.40.50.1860">
    <property type="match status" value="2"/>
</dbReference>
<dbReference type="HAMAP" id="MF_00258">
    <property type="entry name" value="Glu_racemase"/>
    <property type="match status" value="1"/>
</dbReference>
<dbReference type="InterPro" id="IPR015942">
    <property type="entry name" value="Asp/Glu/hydantoin_racemase"/>
</dbReference>
<dbReference type="InterPro" id="IPR001920">
    <property type="entry name" value="Asp/Glu_race"/>
</dbReference>
<dbReference type="InterPro" id="IPR033134">
    <property type="entry name" value="Asp/Glu_racemase_AS_2"/>
</dbReference>
<dbReference type="InterPro" id="IPR004391">
    <property type="entry name" value="Glu_race"/>
</dbReference>
<dbReference type="NCBIfam" id="TIGR00067">
    <property type="entry name" value="glut_race"/>
    <property type="match status" value="1"/>
</dbReference>
<dbReference type="PANTHER" id="PTHR21198">
    <property type="entry name" value="GLUTAMATE RACEMASE"/>
    <property type="match status" value="1"/>
</dbReference>
<dbReference type="PANTHER" id="PTHR21198:SF2">
    <property type="entry name" value="GLUTAMATE RACEMASE"/>
    <property type="match status" value="1"/>
</dbReference>
<dbReference type="Pfam" id="PF01177">
    <property type="entry name" value="Asp_Glu_race"/>
    <property type="match status" value="1"/>
</dbReference>
<dbReference type="SUPFAM" id="SSF53681">
    <property type="entry name" value="Aspartate/glutamate racemase"/>
    <property type="match status" value="2"/>
</dbReference>
<dbReference type="PROSITE" id="PS00924">
    <property type="entry name" value="ASP_GLU_RACEMASE_2"/>
    <property type="match status" value="1"/>
</dbReference>
<sequence>MQHHKATPESPIGIFDSGVGGLTVVRAIQAEMPAERIIYFGDTARVPYGTKSPATIRKYAHEDTAILMSHLPKIIIVACNTVSALALDVVEKTAGSIPVIGVLKAGADLAVQVTRNKHVGVIGTQATVSSNAYADAITLLDANIEVVSKACPLFVPLAEEGFTEHAATRLIASDYLAAFDGHDIDTLVLGCTHYPILRHVITETLHRDIRIIDSAEAVAGRTRKLLADAKLLSTEKHAPPPHLLVSDLPQKFSMLYKLFMESDLPDVELVEV</sequence>
<name>MURI_CHLPD</name>
<evidence type="ECO:0000255" key="1">
    <source>
        <dbReference type="HAMAP-Rule" id="MF_00258"/>
    </source>
</evidence>
<organism>
    <name type="scientific">Chlorobium phaeobacteroides (strain DSM 266 / SMG 266 / 2430)</name>
    <dbReference type="NCBI Taxonomy" id="290317"/>
    <lineage>
        <taxon>Bacteria</taxon>
        <taxon>Pseudomonadati</taxon>
        <taxon>Chlorobiota</taxon>
        <taxon>Chlorobiia</taxon>
        <taxon>Chlorobiales</taxon>
        <taxon>Chlorobiaceae</taxon>
        <taxon>Chlorobium/Pelodictyon group</taxon>
        <taxon>Chlorobium</taxon>
    </lineage>
</organism>